<accession>Q8TRT6</accession>
<comment type="function">
    <text evidence="1">One of two assembly initiator proteins, it binds directly to the 5'-end of the 23S rRNA, where it nucleates assembly of the 50S subunit.</text>
</comment>
<comment type="function">
    <text evidence="1">Located at the polypeptide exit tunnel on the outside of the subunit.</text>
</comment>
<comment type="subunit">
    <text evidence="1">Part of the 50S ribosomal subunit.</text>
</comment>
<comment type="similarity">
    <text evidence="1">Belongs to the universal ribosomal protein uL24 family.</text>
</comment>
<feature type="chain" id="PRO_0000130769" description="Large ribosomal subunit protein uL24">
    <location>
        <begin position="1"/>
        <end position="119"/>
    </location>
</feature>
<sequence>MIAMVSKQPRKQRKARYAAPLHIRQKFMGARLSEALTKEYGTRSAAVITGDTVKVMRGDFKGTEGKVQSVSLMDGTITVDGVISTKVDGTEVPRPLNPSNVMITKLEMKDGRRASSIKK</sequence>
<keyword id="KW-1185">Reference proteome</keyword>
<keyword id="KW-0687">Ribonucleoprotein</keyword>
<keyword id="KW-0689">Ribosomal protein</keyword>
<keyword id="KW-0694">RNA-binding</keyword>
<keyword id="KW-0699">rRNA-binding</keyword>
<organism>
    <name type="scientific">Methanosarcina acetivorans (strain ATCC 35395 / DSM 2834 / JCM 12185 / C2A)</name>
    <dbReference type="NCBI Taxonomy" id="188937"/>
    <lineage>
        <taxon>Archaea</taxon>
        <taxon>Methanobacteriati</taxon>
        <taxon>Methanobacteriota</taxon>
        <taxon>Stenosarchaea group</taxon>
        <taxon>Methanomicrobia</taxon>
        <taxon>Methanosarcinales</taxon>
        <taxon>Methanosarcinaceae</taxon>
        <taxon>Methanosarcina</taxon>
    </lineage>
</organism>
<reference key="1">
    <citation type="journal article" date="2002" name="Genome Res.">
        <title>The genome of Methanosarcina acetivorans reveals extensive metabolic and physiological diversity.</title>
        <authorList>
            <person name="Galagan J.E."/>
            <person name="Nusbaum C."/>
            <person name="Roy A."/>
            <person name="Endrizzi M.G."/>
            <person name="Macdonald P."/>
            <person name="FitzHugh W."/>
            <person name="Calvo S."/>
            <person name="Engels R."/>
            <person name="Smirnov S."/>
            <person name="Atnoor D."/>
            <person name="Brown A."/>
            <person name="Allen N."/>
            <person name="Naylor J."/>
            <person name="Stange-Thomann N."/>
            <person name="DeArellano K."/>
            <person name="Johnson R."/>
            <person name="Linton L."/>
            <person name="McEwan P."/>
            <person name="McKernan K."/>
            <person name="Talamas J."/>
            <person name="Tirrell A."/>
            <person name="Ye W."/>
            <person name="Zimmer A."/>
            <person name="Barber R.D."/>
            <person name="Cann I."/>
            <person name="Graham D.E."/>
            <person name="Grahame D.A."/>
            <person name="Guss A.M."/>
            <person name="Hedderich R."/>
            <person name="Ingram-Smith C."/>
            <person name="Kuettner H.C."/>
            <person name="Krzycki J.A."/>
            <person name="Leigh J.A."/>
            <person name="Li W."/>
            <person name="Liu J."/>
            <person name="Mukhopadhyay B."/>
            <person name="Reeve J.N."/>
            <person name="Smith K."/>
            <person name="Springer T.A."/>
            <person name="Umayam L.A."/>
            <person name="White O."/>
            <person name="White R.H."/>
            <person name="de Macario E.C."/>
            <person name="Ferry J.G."/>
            <person name="Jarrell K.F."/>
            <person name="Jing H."/>
            <person name="Macario A.J.L."/>
            <person name="Paulsen I.T."/>
            <person name="Pritchett M."/>
            <person name="Sowers K.R."/>
            <person name="Swanson R.V."/>
            <person name="Zinder S.H."/>
            <person name="Lander E."/>
            <person name="Metcalf W.W."/>
            <person name="Birren B."/>
        </authorList>
    </citation>
    <scope>NUCLEOTIDE SEQUENCE [LARGE SCALE GENOMIC DNA]</scope>
    <source>
        <strain>ATCC 35395 / DSM 2834 / JCM 12185 / C2A</strain>
    </source>
</reference>
<evidence type="ECO:0000255" key="1">
    <source>
        <dbReference type="HAMAP-Rule" id="MF_01326"/>
    </source>
</evidence>
<evidence type="ECO:0000305" key="2"/>
<proteinExistence type="inferred from homology"/>
<dbReference type="EMBL" id="AE010299">
    <property type="protein sequence ID" value="AAM04508.1"/>
    <property type="molecule type" value="Genomic_DNA"/>
</dbReference>
<dbReference type="SMR" id="Q8TRT6"/>
<dbReference type="FunCoup" id="Q8TRT6">
    <property type="interactions" value="188"/>
</dbReference>
<dbReference type="STRING" id="188937.MA_1083"/>
<dbReference type="EnsemblBacteria" id="AAM04508">
    <property type="protein sequence ID" value="AAM04508"/>
    <property type="gene ID" value="MA_1083"/>
</dbReference>
<dbReference type="KEGG" id="mac:MA_1083"/>
<dbReference type="HOGENOM" id="CLU_093240_2_1_2"/>
<dbReference type="InParanoid" id="Q8TRT6"/>
<dbReference type="PhylomeDB" id="Q8TRT6"/>
<dbReference type="Proteomes" id="UP000002487">
    <property type="component" value="Chromosome"/>
</dbReference>
<dbReference type="GO" id="GO:0022625">
    <property type="term" value="C:cytosolic large ribosomal subunit"/>
    <property type="evidence" value="ECO:0000318"/>
    <property type="project" value="GO_Central"/>
</dbReference>
<dbReference type="GO" id="GO:0003723">
    <property type="term" value="F:RNA binding"/>
    <property type="evidence" value="ECO:0000318"/>
    <property type="project" value="GO_Central"/>
</dbReference>
<dbReference type="GO" id="GO:0019843">
    <property type="term" value="F:rRNA binding"/>
    <property type="evidence" value="ECO:0007669"/>
    <property type="project" value="UniProtKB-UniRule"/>
</dbReference>
<dbReference type="GO" id="GO:0003735">
    <property type="term" value="F:structural constituent of ribosome"/>
    <property type="evidence" value="ECO:0000318"/>
    <property type="project" value="GO_Central"/>
</dbReference>
<dbReference type="GO" id="GO:0002181">
    <property type="term" value="P:cytoplasmic translation"/>
    <property type="evidence" value="ECO:0000318"/>
    <property type="project" value="GO_Central"/>
</dbReference>
<dbReference type="GO" id="GO:0042273">
    <property type="term" value="P:ribosomal large subunit biogenesis"/>
    <property type="evidence" value="ECO:0000318"/>
    <property type="project" value="GO_Central"/>
</dbReference>
<dbReference type="CDD" id="cd06089">
    <property type="entry name" value="KOW_RPL26"/>
    <property type="match status" value="1"/>
</dbReference>
<dbReference type="Gene3D" id="2.30.30.30">
    <property type="match status" value="1"/>
</dbReference>
<dbReference type="HAMAP" id="MF_01326_A">
    <property type="entry name" value="Ribosomal_uL24_A"/>
    <property type="match status" value="1"/>
</dbReference>
<dbReference type="InterPro" id="IPR005824">
    <property type="entry name" value="KOW"/>
</dbReference>
<dbReference type="InterPro" id="IPR014722">
    <property type="entry name" value="Rib_uL2_dom2"/>
</dbReference>
<dbReference type="InterPro" id="IPR005825">
    <property type="entry name" value="Ribosomal_uL24_CS"/>
</dbReference>
<dbReference type="InterPro" id="IPR005756">
    <property type="entry name" value="Ribosomal_uL24_euk/arc"/>
</dbReference>
<dbReference type="InterPro" id="IPR041988">
    <property type="entry name" value="Ribosomal_uL24_KOW"/>
</dbReference>
<dbReference type="InterPro" id="IPR008991">
    <property type="entry name" value="Translation_prot_SH3-like_sf"/>
</dbReference>
<dbReference type="NCBIfam" id="TIGR01080">
    <property type="entry name" value="rplX_A_E"/>
    <property type="match status" value="1"/>
</dbReference>
<dbReference type="PANTHER" id="PTHR11143">
    <property type="entry name" value="60S RIBOSOMAL PROTEIN L26 FAMILY MEMBER"/>
    <property type="match status" value="1"/>
</dbReference>
<dbReference type="Pfam" id="PF00467">
    <property type="entry name" value="KOW"/>
    <property type="match status" value="1"/>
</dbReference>
<dbReference type="Pfam" id="PF16906">
    <property type="entry name" value="Ribosomal_L26"/>
    <property type="match status" value="1"/>
</dbReference>
<dbReference type="SUPFAM" id="SSF50104">
    <property type="entry name" value="Translation proteins SH3-like domain"/>
    <property type="match status" value="1"/>
</dbReference>
<dbReference type="PROSITE" id="PS01108">
    <property type="entry name" value="RIBOSOMAL_L24"/>
    <property type="match status" value="1"/>
</dbReference>
<protein>
    <recommendedName>
        <fullName evidence="1">Large ribosomal subunit protein uL24</fullName>
    </recommendedName>
    <alternativeName>
        <fullName evidence="2">50S ribosomal protein L24</fullName>
    </alternativeName>
</protein>
<name>RL24_METAC</name>
<gene>
    <name evidence="1" type="primary">rpl24</name>
    <name type="ordered locus">MA_1083</name>
</gene>